<sequence>MAANEYDYIIVGAGSAGNVLASRLTEDADVTVLLLEAGGPDYRFDFRTQMPAALAFPLQGRRYNWAYETDPEPHMNNRRMECGRGKGLGGSSLINGMCYIRGNALDYDGWAAHAGLENWTYLDCLPYFRKAETRDAGANAYHGGDGPVHVTTSKPGNNPLFAAMVEAGVQAGFPRTDDLNGYQQEGFGPMDRTVTANGRRASTARGYLDRAKTRPNLTIVTHAVTDRVLFSGKRAVGVAYLHHGNAVNAQARREVLVCSGAIASPQLLQRSGVGRSTWLRELDVPLVHDLPGVGENLQDHLEMYIQYECKEPISLYPALQWWNQPAIGLEWMLKGTGIGASNQFEAGGFIRTRDDDLWPNIQYHFLPVAINYNGSNAIKMHGFQAHVGSMRSPSRGRVKLTSRDPNAHPSILFNYMADPLDWREFRDGIRITREIMRQPALDRYRGRELNPGAELTTDEQLDTFVRMRAETAFHPSCSCKMGYDDMAVVDNEGRVHGMEALRVVDASIMPRITTGNLNAPTIMLAEKIADRIHGREPLARVDTPYFVANGVASRKQESATV</sequence>
<gene>
    <name evidence="1" type="primary">betA</name>
    <name type="ordered locus">Bphyt_5058</name>
</gene>
<dbReference type="EC" id="1.1.99.1" evidence="1"/>
<dbReference type="EC" id="1.2.1.8" evidence="1"/>
<dbReference type="EMBL" id="CP001053">
    <property type="protein sequence ID" value="ACD19422.1"/>
    <property type="molecule type" value="Genomic_DNA"/>
</dbReference>
<dbReference type="RefSeq" id="WP_012426933.1">
    <property type="nucleotide sequence ID" value="NC_010676.1"/>
</dbReference>
<dbReference type="SMR" id="B2TCJ8"/>
<dbReference type="STRING" id="398527.Bphyt_5058"/>
<dbReference type="KEGG" id="bpy:Bphyt_5058"/>
<dbReference type="eggNOG" id="COG2303">
    <property type="taxonomic scope" value="Bacteria"/>
</dbReference>
<dbReference type="HOGENOM" id="CLU_002865_7_1_4"/>
<dbReference type="OrthoDB" id="9785276at2"/>
<dbReference type="UniPathway" id="UPA00529">
    <property type="reaction ID" value="UER00385"/>
</dbReference>
<dbReference type="Proteomes" id="UP000001739">
    <property type="component" value="Chromosome 2"/>
</dbReference>
<dbReference type="GO" id="GO:0016020">
    <property type="term" value="C:membrane"/>
    <property type="evidence" value="ECO:0007669"/>
    <property type="project" value="TreeGrafter"/>
</dbReference>
<dbReference type="GO" id="GO:0008802">
    <property type="term" value="F:betaine-aldehyde dehydrogenase (NAD+) activity"/>
    <property type="evidence" value="ECO:0007669"/>
    <property type="project" value="UniProtKB-EC"/>
</dbReference>
<dbReference type="GO" id="GO:0008812">
    <property type="term" value="F:choline dehydrogenase activity"/>
    <property type="evidence" value="ECO:0007669"/>
    <property type="project" value="UniProtKB-UniRule"/>
</dbReference>
<dbReference type="GO" id="GO:0050660">
    <property type="term" value="F:flavin adenine dinucleotide binding"/>
    <property type="evidence" value="ECO:0007669"/>
    <property type="project" value="InterPro"/>
</dbReference>
<dbReference type="GO" id="GO:0019285">
    <property type="term" value="P:glycine betaine biosynthetic process from choline"/>
    <property type="evidence" value="ECO:0007669"/>
    <property type="project" value="UniProtKB-UniRule"/>
</dbReference>
<dbReference type="Gene3D" id="3.50.50.60">
    <property type="entry name" value="FAD/NAD(P)-binding domain"/>
    <property type="match status" value="1"/>
</dbReference>
<dbReference type="Gene3D" id="3.30.560.10">
    <property type="entry name" value="Glucose Oxidase, domain 3"/>
    <property type="match status" value="1"/>
</dbReference>
<dbReference type="HAMAP" id="MF_00750">
    <property type="entry name" value="Choline_dehydrogen"/>
    <property type="match status" value="1"/>
</dbReference>
<dbReference type="InterPro" id="IPR011533">
    <property type="entry name" value="BetA"/>
</dbReference>
<dbReference type="InterPro" id="IPR036188">
    <property type="entry name" value="FAD/NAD-bd_sf"/>
</dbReference>
<dbReference type="InterPro" id="IPR012132">
    <property type="entry name" value="GMC_OxRdtase"/>
</dbReference>
<dbReference type="InterPro" id="IPR000172">
    <property type="entry name" value="GMC_OxRdtase_N"/>
</dbReference>
<dbReference type="InterPro" id="IPR007867">
    <property type="entry name" value="GMC_OxRtase_C"/>
</dbReference>
<dbReference type="NCBIfam" id="TIGR01810">
    <property type="entry name" value="betA"/>
    <property type="match status" value="1"/>
</dbReference>
<dbReference type="NCBIfam" id="NF002550">
    <property type="entry name" value="PRK02106.1"/>
    <property type="match status" value="1"/>
</dbReference>
<dbReference type="PANTHER" id="PTHR11552:SF147">
    <property type="entry name" value="CHOLINE DEHYDROGENASE, MITOCHONDRIAL"/>
    <property type="match status" value="1"/>
</dbReference>
<dbReference type="PANTHER" id="PTHR11552">
    <property type="entry name" value="GLUCOSE-METHANOL-CHOLINE GMC OXIDOREDUCTASE"/>
    <property type="match status" value="1"/>
</dbReference>
<dbReference type="Pfam" id="PF05199">
    <property type="entry name" value="GMC_oxred_C"/>
    <property type="match status" value="1"/>
</dbReference>
<dbReference type="Pfam" id="PF00732">
    <property type="entry name" value="GMC_oxred_N"/>
    <property type="match status" value="1"/>
</dbReference>
<dbReference type="PIRSF" id="PIRSF000137">
    <property type="entry name" value="Alcohol_oxidase"/>
    <property type="match status" value="1"/>
</dbReference>
<dbReference type="SUPFAM" id="SSF54373">
    <property type="entry name" value="FAD-linked reductases, C-terminal domain"/>
    <property type="match status" value="1"/>
</dbReference>
<dbReference type="SUPFAM" id="SSF51905">
    <property type="entry name" value="FAD/NAD(P)-binding domain"/>
    <property type="match status" value="1"/>
</dbReference>
<dbReference type="PROSITE" id="PS00623">
    <property type="entry name" value="GMC_OXRED_1"/>
    <property type="match status" value="1"/>
</dbReference>
<dbReference type="PROSITE" id="PS00624">
    <property type="entry name" value="GMC_OXRED_2"/>
    <property type="match status" value="1"/>
</dbReference>
<evidence type="ECO:0000255" key="1">
    <source>
        <dbReference type="HAMAP-Rule" id="MF_00750"/>
    </source>
</evidence>
<accession>B2TCJ8</accession>
<reference key="1">
    <citation type="journal article" date="2011" name="J. Bacteriol.">
        <title>Complete genome sequence of the plant growth-promoting endophyte Burkholderia phytofirmans strain PsJN.</title>
        <authorList>
            <person name="Weilharter A."/>
            <person name="Mitter B."/>
            <person name="Shin M.V."/>
            <person name="Chain P.S."/>
            <person name="Nowak J."/>
            <person name="Sessitsch A."/>
        </authorList>
    </citation>
    <scope>NUCLEOTIDE SEQUENCE [LARGE SCALE GENOMIC DNA]</scope>
    <source>
        <strain>DSM 17436 / LMG 22146 / PsJN</strain>
    </source>
</reference>
<name>BETA_PARPJ</name>
<proteinExistence type="inferred from homology"/>
<keyword id="KW-0274">FAD</keyword>
<keyword id="KW-0285">Flavoprotein</keyword>
<keyword id="KW-0520">NAD</keyword>
<keyword id="KW-0560">Oxidoreductase</keyword>
<comment type="function">
    <text evidence="1">Involved in the biosynthesis of the osmoprotectant glycine betaine. Catalyzes the oxidation of choline to betaine aldehyde and betaine aldehyde to glycine betaine at the same rate.</text>
</comment>
<comment type="catalytic activity">
    <reaction evidence="1">
        <text>choline + A = betaine aldehyde + AH2</text>
        <dbReference type="Rhea" id="RHEA:17433"/>
        <dbReference type="ChEBI" id="CHEBI:13193"/>
        <dbReference type="ChEBI" id="CHEBI:15354"/>
        <dbReference type="ChEBI" id="CHEBI:15710"/>
        <dbReference type="ChEBI" id="CHEBI:17499"/>
        <dbReference type="EC" id="1.1.99.1"/>
    </reaction>
</comment>
<comment type="catalytic activity">
    <reaction evidence="1">
        <text>betaine aldehyde + NAD(+) + H2O = glycine betaine + NADH + 2 H(+)</text>
        <dbReference type="Rhea" id="RHEA:15305"/>
        <dbReference type="ChEBI" id="CHEBI:15377"/>
        <dbReference type="ChEBI" id="CHEBI:15378"/>
        <dbReference type="ChEBI" id="CHEBI:15710"/>
        <dbReference type="ChEBI" id="CHEBI:17750"/>
        <dbReference type="ChEBI" id="CHEBI:57540"/>
        <dbReference type="ChEBI" id="CHEBI:57945"/>
        <dbReference type="EC" id="1.2.1.8"/>
    </reaction>
</comment>
<comment type="cofactor">
    <cofactor evidence="1">
        <name>FAD</name>
        <dbReference type="ChEBI" id="CHEBI:57692"/>
    </cofactor>
</comment>
<comment type="pathway">
    <text evidence="1">Amine and polyamine biosynthesis; betaine biosynthesis via choline pathway; betaine aldehyde from choline (cytochrome c reductase route): step 1/1.</text>
</comment>
<comment type="similarity">
    <text evidence="1">Belongs to the GMC oxidoreductase family.</text>
</comment>
<feature type="chain" id="PRO_1000133325" description="Oxygen-dependent choline dehydrogenase">
    <location>
        <begin position="1"/>
        <end position="561"/>
    </location>
</feature>
<feature type="active site" description="Proton acceptor" evidence="1">
    <location>
        <position position="474"/>
    </location>
</feature>
<feature type="binding site" evidence="1">
    <location>
        <begin position="7"/>
        <end position="36"/>
    </location>
    <ligand>
        <name>FAD</name>
        <dbReference type="ChEBI" id="CHEBI:57692"/>
    </ligand>
</feature>
<protein>
    <recommendedName>
        <fullName evidence="1">Oxygen-dependent choline dehydrogenase</fullName>
        <shortName evidence="1">CDH</shortName>
        <shortName evidence="1">CHD</shortName>
        <ecNumber evidence="1">1.1.99.1</ecNumber>
    </recommendedName>
    <alternativeName>
        <fullName evidence="1">Betaine aldehyde dehydrogenase</fullName>
        <shortName evidence="1">BADH</shortName>
        <ecNumber evidence="1">1.2.1.8</ecNumber>
    </alternativeName>
</protein>
<organism>
    <name type="scientific">Paraburkholderia phytofirmans (strain DSM 17436 / LMG 22146 / PsJN)</name>
    <name type="common">Burkholderia phytofirmans</name>
    <dbReference type="NCBI Taxonomy" id="398527"/>
    <lineage>
        <taxon>Bacteria</taxon>
        <taxon>Pseudomonadati</taxon>
        <taxon>Pseudomonadota</taxon>
        <taxon>Betaproteobacteria</taxon>
        <taxon>Burkholderiales</taxon>
        <taxon>Burkholderiaceae</taxon>
        <taxon>Paraburkholderia</taxon>
    </lineage>
</organism>